<sequence length="768" mass="82444">MSASRAAELRKRLNHYAHSYHTLDTSLVSDAEYDRLFRELQSLEAADPTLISADSPTHRVGGAILEGFEKVRHRVAMLSLDNAFSAQDLVEFHRRVQEGLAESVVVEAVQHYQDEYGLSDLGALVGRPGALEGVARDVTQRLNQTLSFVEPLQPPDTKSLLSSGRKAADILRRLRLWAAEQPQRVEYVAEPKLDGLAFSLTYAEGVLVRAATRGDGQEGEDVTAHARTIQDVPLRLQGAGYPALLEVRGEVYMPLATFEKLNAEARERGEKTFANPRNAAAGSLRQLDPKITASRGLRMFCYGTGYVEGGTLADRYAEILAALKGWGLRVSPEAERVEGAQGCLAYTERLGEKRETLPYEIDGAVLKVDSQRLRERLGFVARAPRWAMAFKFPATEESTTVQAIDLQVGRTGVITPVARLEPVAVGGVTVTNATLHNFLELARKDVRVGDRVIVRRAGDVIPEVVRVIPRESHGALAVYKEPVACPVCGAPTEREGGETALRCSGGLTCRAQVKEGVKHFASRKAMNIEGLGDKLVALLMQAGLVERISDLYRLHEQRQVLVGLERLGGKSVANLLEAIEQSKAQSAARFLFGLGIRDVGVTLAGSLAAHFTSLDALMAATVEDLVGIEDVGEVVARRVVHFFAQAHHGAELAALRALGVAAAGEPWRVEPDGHGVAAAEQPLSGLSVVLTGTLAGLTREAAAVRLEGLGAKVVASVSGKTGCLVCGESAGSKLAKAQKAGVPVLDEAALEGLFRGEIPPEIQARMQG</sequence>
<evidence type="ECO:0000255" key="1">
    <source>
        <dbReference type="HAMAP-Rule" id="MF_01588"/>
    </source>
</evidence>
<reference key="1">
    <citation type="journal article" date="2009" name="Appl. Environ. Microbiol.">
        <title>Complete genome sequence of the chemolithoautotrophic marine magnetotactic coccus strain MC-1.</title>
        <authorList>
            <person name="Schubbe S."/>
            <person name="Williams T.J."/>
            <person name="Xie G."/>
            <person name="Kiss H.E."/>
            <person name="Brettin T.S."/>
            <person name="Martinez D."/>
            <person name="Ross C.A."/>
            <person name="Schuler D."/>
            <person name="Cox B.L."/>
            <person name="Nealson K.H."/>
            <person name="Bazylinski D.A."/>
        </authorList>
    </citation>
    <scope>NUCLEOTIDE SEQUENCE [LARGE SCALE GENOMIC DNA]</scope>
    <source>
        <strain>ATCC BAA-1437 / JCM 17883 / MC-1</strain>
    </source>
</reference>
<gene>
    <name evidence="1" type="primary">ligA</name>
    <name type="ordered locus">Mmc1_3689</name>
</gene>
<accession>A0LDY1</accession>
<dbReference type="EC" id="6.5.1.2" evidence="1"/>
<dbReference type="EMBL" id="CP000471">
    <property type="protein sequence ID" value="ABK46174.1"/>
    <property type="molecule type" value="Genomic_DNA"/>
</dbReference>
<dbReference type="RefSeq" id="WP_011715227.1">
    <property type="nucleotide sequence ID" value="NC_008576.1"/>
</dbReference>
<dbReference type="SMR" id="A0LDY1"/>
<dbReference type="STRING" id="156889.Mmc1_3689"/>
<dbReference type="KEGG" id="mgm:Mmc1_3689"/>
<dbReference type="eggNOG" id="COG0272">
    <property type="taxonomic scope" value="Bacteria"/>
</dbReference>
<dbReference type="HOGENOM" id="CLU_007764_2_1_5"/>
<dbReference type="OrthoDB" id="9759736at2"/>
<dbReference type="Proteomes" id="UP000002586">
    <property type="component" value="Chromosome"/>
</dbReference>
<dbReference type="GO" id="GO:0003677">
    <property type="term" value="F:DNA binding"/>
    <property type="evidence" value="ECO:0007669"/>
    <property type="project" value="InterPro"/>
</dbReference>
<dbReference type="GO" id="GO:0003911">
    <property type="term" value="F:DNA ligase (NAD+) activity"/>
    <property type="evidence" value="ECO:0007669"/>
    <property type="project" value="UniProtKB-UniRule"/>
</dbReference>
<dbReference type="GO" id="GO:0046872">
    <property type="term" value="F:metal ion binding"/>
    <property type="evidence" value="ECO:0007669"/>
    <property type="project" value="UniProtKB-KW"/>
</dbReference>
<dbReference type="GO" id="GO:0006281">
    <property type="term" value="P:DNA repair"/>
    <property type="evidence" value="ECO:0007669"/>
    <property type="project" value="UniProtKB-KW"/>
</dbReference>
<dbReference type="GO" id="GO:0006260">
    <property type="term" value="P:DNA replication"/>
    <property type="evidence" value="ECO:0007669"/>
    <property type="project" value="UniProtKB-KW"/>
</dbReference>
<dbReference type="CDD" id="cd17748">
    <property type="entry name" value="BRCT_DNA_ligase_like"/>
    <property type="match status" value="1"/>
</dbReference>
<dbReference type="CDD" id="cd00114">
    <property type="entry name" value="LIGANc"/>
    <property type="match status" value="1"/>
</dbReference>
<dbReference type="FunFam" id="1.10.150.20:FF:000006">
    <property type="entry name" value="DNA ligase"/>
    <property type="match status" value="1"/>
</dbReference>
<dbReference type="FunFam" id="1.10.150.20:FF:000007">
    <property type="entry name" value="DNA ligase"/>
    <property type="match status" value="1"/>
</dbReference>
<dbReference type="FunFam" id="2.40.50.140:FF:000012">
    <property type="entry name" value="DNA ligase"/>
    <property type="match status" value="1"/>
</dbReference>
<dbReference type="FunFam" id="3.30.470.30:FF:000001">
    <property type="entry name" value="DNA ligase"/>
    <property type="match status" value="1"/>
</dbReference>
<dbReference type="Gene3D" id="6.20.10.30">
    <property type="match status" value="1"/>
</dbReference>
<dbReference type="Gene3D" id="1.10.150.20">
    <property type="entry name" value="5' to 3' exonuclease, C-terminal subdomain"/>
    <property type="match status" value="2"/>
</dbReference>
<dbReference type="Gene3D" id="3.40.50.10190">
    <property type="entry name" value="BRCT domain"/>
    <property type="match status" value="1"/>
</dbReference>
<dbReference type="Gene3D" id="3.30.470.30">
    <property type="entry name" value="DNA ligase/mRNA capping enzyme"/>
    <property type="match status" value="1"/>
</dbReference>
<dbReference type="Gene3D" id="1.10.287.610">
    <property type="entry name" value="Helix hairpin bin"/>
    <property type="match status" value="1"/>
</dbReference>
<dbReference type="Gene3D" id="2.40.50.140">
    <property type="entry name" value="Nucleic acid-binding proteins"/>
    <property type="match status" value="1"/>
</dbReference>
<dbReference type="HAMAP" id="MF_01588">
    <property type="entry name" value="DNA_ligase_A"/>
    <property type="match status" value="1"/>
</dbReference>
<dbReference type="InterPro" id="IPR001357">
    <property type="entry name" value="BRCT_dom"/>
</dbReference>
<dbReference type="InterPro" id="IPR036420">
    <property type="entry name" value="BRCT_dom_sf"/>
</dbReference>
<dbReference type="InterPro" id="IPR041663">
    <property type="entry name" value="DisA/LigA_HHH"/>
</dbReference>
<dbReference type="InterPro" id="IPR001679">
    <property type="entry name" value="DNA_ligase"/>
</dbReference>
<dbReference type="InterPro" id="IPR018239">
    <property type="entry name" value="DNA_ligase_AS"/>
</dbReference>
<dbReference type="InterPro" id="IPR033136">
    <property type="entry name" value="DNA_ligase_CS"/>
</dbReference>
<dbReference type="InterPro" id="IPR013839">
    <property type="entry name" value="DNAligase_adenylation"/>
</dbReference>
<dbReference type="InterPro" id="IPR013840">
    <property type="entry name" value="DNAligase_N"/>
</dbReference>
<dbReference type="InterPro" id="IPR003583">
    <property type="entry name" value="Hlx-hairpin-Hlx_DNA-bd_motif"/>
</dbReference>
<dbReference type="InterPro" id="IPR012340">
    <property type="entry name" value="NA-bd_OB-fold"/>
</dbReference>
<dbReference type="InterPro" id="IPR004150">
    <property type="entry name" value="NAD_DNA_ligase_OB"/>
</dbReference>
<dbReference type="InterPro" id="IPR010994">
    <property type="entry name" value="RuvA_2-like"/>
</dbReference>
<dbReference type="InterPro" id="IPR004149">
    <property type="entry name" value="Znf_DNAligase_C4"/>
</dbReference>
<dbReference type="NCBIfam" id="TIGR00575">
    <property type="entry name" value="dnlj"/>
    <property type="match status" value="1"/>
</dbReference>
<dbReference type="NCBIfam" id="NF005932">
    <property type="entry name" value="PRK07956.1"/>
    <property type="match status" value="1"/>
</dbReference>
<dbReference type="PANTHER" id="PTHR23389">
    <property type="entry name" value="CHROMOSOME TRANSMISSION FIDELITY FACTOR 18"/>
    <property type="match status" value="1"/>
</dbReference>
<dbReference type="PANTHER" id="PTHR23389:SF9">
    <property type="entry name" value="DNA LIGASE"/>
    <property type="match status" value="1"/>
</dbReference>
<dbReference type="Pfam" id="PF00533">
    <property type="entry name" value="BRCT"/>
    <property type="match status" value="1"/>
</dbReference>
<dbReference type="Pfam" id="PF01653">
    <property type="entry name" value="DNA_ligase_aden"/>
    <property type="match status" value="2"/>
</dbReference>
<dbReference type="Pfam" id="PF03120">
    <property type="entry name" value="DNA_ligase_OB"/>
    <property type="match status" value="1"/>
</dbReference>
<dbReference type="Pfam" id="PF03119">
    <property type="entry name" value="DNA_ligase_ZBD"/>
    <property type="match status" value="1"/>
</dbReference>
<dbReference type="Pfam" id="PF12826">
    <property type="entry name" value="HHH_2"/>
    <property type="match status" value="1"/>
</dbReference>
<dbReference type="PIRSF" id="PIRSF001604">
    <property type="entry name" value="LigA"/>
    <property type="match status" value="1"/>
</dbReference>
<dbReference type="SMART" id="SM00292">
    <property type="entry name" value="BRCT"/>
    <property type="match status" value="1"/>
</dbReference>
<dbReference type="SMART" id="SM00278">
    <property type="entry name" value="HhH1"/>
    <property type="match status" value="3"/>
</dbReference>
<dbReference type="SMART" id="SM00532">
    <property type="entry name" value="LIGANc"/>
    <property type="match status" value="1"/>
</dbReference>
<dbReference type="SUPFAM" id="SSF52113">
    <property type="entry name" value="BRCT domain"/>
    <property type="match status" value="1"/>
</dbReference>
<dbReference type="SUPFAM" id="SSF56091">
    <property type="entry name" value="DNA ligase/mRNA capping enzyme, catalytic domain"/>
    <property type="match status" value="2"/>
</dbReference>
<dbReference type="SUPFAM" id="SSF50249">
    <property type="entry name" value="Nucleic acid-binding proteins"/>
    <property type="match status" value="1"/>
</dbReference>
<dbReference type="SUPFAM" id="SSF47781">
    <property type="entry name" value="RuvA domain 2-like"/>
    <property type="match status" value="1"/>
</dbReference>
<dbReference type="PROSITE" id="PS50172">
    <property type="entry name" value="BRCT"/>
    <property type="match status" value="1"/>
</dbReference>
<dbReference type="PROSITE" id="PS01055">
    <property type="entry name" value="DNA_LIGASE_N1"/>
    <property type="match status" value="1"/>
</dbReference>
<dbReference type="PROSITE" id="PS01056">
    <property type="entry name" value="DNA_LIGASE_N2"/>
    <property type="match status" value="1"/>
</dbReference>
<proteinExistence type="inferred from homology"/>
<comment type="function">
    <text evidence="1">DNA ligase that catalyzes the formation of phosphodiester linkages between 5'-phosphoryl and 3'-hydroxyl groups in double-stranded DNA using NAD as a coenzyme and as the energy source for the reaction. It is essential for DNA replication and repair of damaged DNA.</text>
</comment>
<comment type="catalytic activity">
    <reaction evidence="1">
        <text>NAD(+) + (deoxyribonucleotide)n-3'-hydroxyl + 5'-phospho-(deoxyribonucleotide)m = (deoxyribonucleotide)n+m + AMP + beta-nicotinamide D-nucleotide.</text>
        <dbReference type="EC" id="6.5.1.2"/>
    </reaction>
</comment>
<comment type="cofactor">
    <cofactor evidence="1">
        <name>Mg(2+)</name>
        <dbReference type="ChEBI" id="CHEBI:18420"/>
    </cofactor>
    <cofactor evidence="1">
        <name>Mn(2+)</name>
        <dbReference type="ChEBI" id="CHEBI:29035"/>
    </cofactor>
</comment>
<comment type="similarity">
    <text evidence="1">Belongs to the NAD-dependent DNA ligase family. LigA subfamily.</text>
</comment>
<organism>
    <name type="scientific">Magnetococcus marinus (strain ATCC BAA-1437 / JCM 17883 / MC-1)</name>
    <dbReference type="NCBI Taxonomy" id="156889"/>
    <lineage>
        <taxon>Bacteria</taxon>
        <taxon>Pseudomonadati</taxon>
        <taxon>Pseudomonadota</taxon>
        <taxon>Alphaproteobacteria</taxon>
        <taxon>Magnetococcales</taxon>
        <taxon>Magnetococcaceae</taxon>
        <taxon>Magnetococcus</taxon>
    </lineage>
</organism>
<feature type="chain" id="PRO_0000313299" description="DNA ligase">
    <location>
        <begin position="1"/>
        <end position="768"/>
    </location>
</feature>
<feature type="domain" description="BRCT" evidence="1">
    <location>
        <begin position="678"/>
        <end position="767"/>
    </location>
</feature>
<feature type="active site" description="N6-AMP-lysine intermediate" evidence="1">
    <location>
        <position position="192"/>
    </location>
</feature>
<feature type="binding site" evidence="1">
    <location>
        <begin position="30"/>
        <end position="34"/>
    </location>
    <ligand>
        <name>NAD(+)</name>
        <dbReference type="ChEBI" id="CHEBI:57540"/>
    </ligand>
</feature>
<feature type="binding site" evidence="1">
    <location>
        <begin position="79"/>
        <end position="80"/>
    </location>
    <ligand>
        <name>NAD(+)</name>
        <dbReference type="ChEBI" id="CHEBI:57540"/>
    </ligand>
</feature>
<feature type="binding site" evidence="1">
    <location>
        <position position="190"/>
    </location>
    <ligand>
        <name>NAD(+)</name>
        <dbReference type="ChEBI" id="CHEBI:57540"/>
    </ligand>
</feature>
<feature type="binding site" evidence="1">
    <location>
        <position position="213"/>
    </location>
    <ligand>
        <name>NAD(+)</name>
        <dbReference type="ChEBI" id="CHEBI:57540"/>
    </ligand>
</feature>
<feature type="binding site" evidence="1">
    <location>
        <position position="250"/>
    </location>
    <ligand>
        <name>NAD(+)</name>
        <dbReference type="ChEBI" id="CHEBI:57540"/>
    </ligand>
</feature>
<feature type="binding site" evidence="1">
    <location>
        <position position="367"/>
    </location>
    <ligand>
        <name>NAD(+)</name>
        <dbReference type="ChEBI" id="CHEBI:57540"/>
    </ligand>
</feature>
<feature type="binding site" evidence="1">
    <location>
        <position position="391"/>
    </location>
    <ligand>
        <name>NAD(+)</name>
        <dbReference type="ChEBI" id="CHEBI:57540"/>
    </ligand>
</feature>
<feature type="binding site" evidence="1">
    <location>
        <position position="485"/>
    </location>
    <ligand>
        <name>Zn(2+)</name>
        <dbReference type="ChEBI" id="CHEBI:29105"/>
    </ligand>
</feature>
<feature type="binding site" evidence="1">
    <location>
        <position position="488"/>
    </location>
    <ligand>
        <name>Zn(2+)</name>
        <dbReference type="ChEBI" id="CHEBI:29105"/>
    </ligand>
</feature>
<feature type="binding site" evidence="1">
    <location>
        <position position="503"/>
    </location>
    <ligand>
        <name>Zn(2+)</name>
        <dbReference type="ChEBI" id="CHEBI:29105"/>
    </ligand>
</feature>
<feature type="binding site" evidence="1">
    <location>
        <position position="509"/>
    </location>
    <ligand>
        <name>Zn(2+)</name>
        <dbReference type="ChEBI" id="CHEBI:29105"/>
    </ligand>
</feature>
<keyword id="KW-0227">DNA damage</keyword>
<keyword id="KW-0234">DNA repair</keyword>
<keyword id="KW-0235">DNA replication</keyword>
<keyword id="KW-0436">Ligase</keyword>
<keyword id="KW-0460">Magnesium</keyword>
<keyword id="KW-0464">Manganese</keyword>
<keyword id="KW-0479">Metal-binding</keyword>
<keyword id="KW-0520">NAD</keyword>
<keyword id="KW-1185">Reference proteome</keyword>
<keyword id="KW-0862">Zinc</keyword>
<protein>
    <recommendedName>
        <fullName evidence="1">DNA ligase</fullName>
        <ecNumber evidence="1">6.5.1.2</ecNumber>
    </recommendedName>
    <alternativeName>
        <fullName evidence="1">Polydeoxyribonucleotide synthase [NAD(+)]</fullName>
    </alternativeName>
</protein>
<name>DNLJ_MAGMM</name>